<comment type="similarity">
    <text evidence="1">Belongs to the UPF0302 family.</text>
</comment>
<organism>
    <name type="scientific">Staphylococcus epidermidis (strain ATCC 12228 / FDA PCI 1200)</name>
    <dbReference type="NCBI Taxonomy" id="176280"/>
    <lineage>
        <taxon>Bacteria</taxon>
        <taxon>Bacillati</taxon>
        <taxon>Bacillota</taxon>
        <taxon>Bacilli</taxon>
        <taxon>Bacillales</taxon>
        <taxon>Staphylococcaceae</taxon>
        <taxon>Staphylococcus</taxon>
    </lineage>
</organism>
<reference key="1">
    <citation type="journal article" date="2003" name="Mol. Microbiol.">
        <title>Genome-based analysis of virulence genes in a non-biofilm-forming Staphylococcus epidermidis strain (ATCC 12228).</title>
        <authorList>
            <person name="Zhang Y.-Q."/>
            <person name="Ren S.-X."/>
            <person name="Li H.-L."/>
            <person name="Wang Y.-X."/>
            <person name="Fu G."/>
            <person name="Yang J."/>
            <person name="Qin Z.-Q."/>
            <person name="Miao Y.-G."/>
            <person name="Wang W.-Y."/>
            <person name="Chen R.-S."/>
            <person name="Shen Y."/>
            <person name="Chen Z."/>
            <person name="Yuan Z.-H."/>
            <person name="Zhao G.-P."/>
            <person name="Qu D."/>
            <person name="Danchin A."/>
            <person name="Wen Y.-M."/>
        </authorList>
    </citation>
    <scope>NUCLEOTIDE SEQUENCE [LARGE SCALE GENOMIC DNA]</scope>
    <source>
        <strain>ATCC 12228 / FDA PCI 1200</strain>
    </source>
</reference>
<gene>
    <name type="ordered locus">SE_1151</name>
</gene>
<sequence>MNDSLIRIKQNFIEYILFNYRFKSRITVWVLNYLKANQDKLNNVHFVNSKINNHYTLEIAEVDATASAIQLSKDNKSYINTNQIFNYIANHTLRLDIQIHFANCHIRESRLDDLILMQLIHSPSYSSYVQDLYSISMDKRKQTFIIQTLQNNIDLSLQMNEPDYFYQLTQILNVLKSKDIQSTLHER</sequence>
<protein>
    <recommendedName>
        <fullName evidence="1">UPF0302 protein SE_1151</fullName>
    </recommendedName>
</protein>
<accession>Q8CSI3</accession>
<feature type="chain" id="PRO_0000216110" description="UPF0302 protein SE_1151">
    <location>
        <begin position="1"/>
        <end position="187"/>
    </location>
</feature>
<dbReference type="EMBL" id="AE015929">
    <property type="protein sequence ID" value="AAO04748.1"/>
    <property type="molecule type" value="Genomic_DNA"/>
</dbReference>
<dbReference type="RefSeq" id="NP_764706.1">
    <property type="nucleotide sequence ID" value="NC_004461.1"/>
</dbReference>
<dbReference type="RefSeq" id="WP_001831161.1">
    <property type="nucleotide sequence ID" value="NZ_WBME01000006.1"/>
</dbReference>
<dbReference type="SMR" id="Q8CSI3"/>
<dbReference type="KEGG" id="sep:SE_1151"/>
<dbReference type="PATRIC" id="fig|176280.10.peg.1123"/>
<dbReference type="eggNOG" id="COG5582">
    <property type="taxonomic scope" value="Bacteria"/>
</dbReference>
<dbReference type="HOGENOM" id="CLU_122408_0_0_9"/>
<dbReference type="OrthoDB" id="2155814at2"/>
<dbReference type="Proteomes" id="UP000001411">
    <property type="component" value="Chromosome"/>
</dbReference>
<dbReference type="Gene3D" id="3.40.1530.30">
    <property type="entry name" value="Uncharacterised family UPF0302, N-terminal domain"/>
    <property type="match status" value="1"/>
</dbReference>
<dbReference type="HAMAP" id="MF_00760">
    <property type="entry name" value="UPF0302"/>
    <property type="match status" value="1"/>
</dbReference>
<dbReference type="InterPro" id="IPR014957">
    <property type="entry name" value="IDEAL_dom"/>
</dbReference>
<dbReference type="InterPro" id="IPR011188">
    <property type="entry name" value="UPF0302"/>
</dbReference>
<dbReference type="InterPro" id="IPR014963">
    <property type="entry name" value="UPF0302_N"/>
</dbReference>
<dbReference type="InterPro" id="IPR038091">
    <property type="entry name" value="UPF0302_N_sf"/>
</dbReference>
<dbReference type="Pfam" id="PF08858">
    <property type="entry name" value="IDEAL"/>
    <property type="match status" value="1"/>
</dbReference>
<dbReference type="Pfam" id="PF08864">
    <property type="entry name" value="UPF0302"/>
    <property type="match status" value="1"/>
</dbReference>
<dbReference type="PIRSF" id="PIRSF007165">
    <property type="entry name" value="UCP007165"/>
    <property type="match status" value="1"/>
</dbReference>
<dbReference type="SMART" id="SM00914">
    <property type="entry name" value="IDEAL"/>
    <property type="match status" value="1"/>
</dbReference>
<evidence type="ECO:0000255" key="1">
    <source>
        <dbReference type="HAMAP-Rule" id="MF_00760"/>
    </source>
</evidence>
<name>Y1151_STAES</name>
<proteinExistence type="inferred from homology"/>